<feature type="chain" id="PRO_0000281152" description="BTB/POZ domain-containing protein KCTD21">
    <location>
        <begin position="1"/>
        <end position="260"/>
    </location>
</feature>
<feature type="domain" description="BTB" evidence="3">
    <location>
        <begin position="3"/>
        <end position="72"/>
    </location>
</feature>
<feature type="coiled-coil region" evidence="2">
    <location>
        <begin position="88"/>
        <end position="112"/>
    </location>
</feature>
<dbReference type="EMBL" id="AK141547">
    <property type="protein sequence ID" value="BAE24730.1"/>
    <property type="molecule type" value="mRNA"/>
</dbReference>
<dbReference type="CCDS" id="CCDS21456.1"/>
<dbReference type="RefSeq" id="NP_001034128.2">
    <property type="nucleotide sequence ID" value="NM_001039039.3"/>
</dbReference>
<dbReference type="SMR" id="Q3URF8"/>
<dbReference type="FunCoup" id="Q3URF8">
    <property type="interactions" value="25"/>
</dbReference>
<dbReference type="STRING" id="10090.ENSMUSP00000051316"/>
<dbReference type="GlyGen" id="Q3URF8">
    <property type="glycosylation" value="1 site, 1 N-linked glycan (1 site)"/>
</dbReference>
<dbReference type="PhosphoSitePlus" id="Q3URF8"/>
<dbReference type="PaxDb" id="10090-ENSMUSP00000051316"/>
<dbReference type="ProteomicsDB" id="301762"/>
<dbReference type="GeneID" id="622320"/>
<dbReference type="KEGG" id="mmu:622320"/>
<dbReference type="AGR" id="MGI:3643121"/>
<dbReference type="CTD" id="283219"/>
<dbReference type="MGI" id="MGI:3643121">
    <property type="gene designation" value="Kctd21"/>
</dbReference>
<dbReference type="eggNOG" id="KOG2723">
    <property type="taxonomic scope" value="Eukaryota"/>
</dbReference>
<dbReference type="InParanoid" id="Q3URF8"/>
<dbReference type="OrthoDB" id="2414723at2759"/>
<dbReference type="PhylomeDB" id="Q3URF8"/>
<dbReference type="UniPathway" id="UPA00143"/>
<dbReference type="BioGRID-ORCS" id="622320">
    <property type="hits" value="2 hits in 78 CRISPR screens"/>
</dbReference>
<dbReference type="ChiTaRS" id="Kctd21">
    <property type="organism name" value="mouse"/>
</dbReference>
<dbReference type="PRO" id="PR:Q3URF8"/>
<dbReference type="Proteomes" id="UP000000589">
    <property type="component" value="Unplaced"/>
</dbReference>
<dbReference type="RNAct" id="Q3URF8">
    <property type="molecule type" value="protein"/>
</dbReference>
<dbReference type="GO" id="GO:0051260">
    <property type="term" value="P:protein homooligomerization"/>
    <property type="evidence" value="ECO:0007669"/>
    <property type="project" value="InterPro"/>
</dbReference>
<dbReference type="GO" id="GO:0016567">
    <property type="term" value="P:protein ubiquitination"/>
    <property type="evidence" value="ECO:0007669"/>
    <property type="project" value="UniProtKB-UniPathway"/>
</dbReference>
<dbReference type="CDD" id="cd18395">
    <property type="entry name" value="BTB_POZ_KCTD21"/>
    <property type="match status" value="1"/>
</dbReference>
<dbReference type="FunFam" id="3.30.710.10:FF:000003">
    <property type="entry name" value="BTB/POZ domain-containing protein KCTD6 isoform X2"/>
    <property type="match status" value="1"/>
</dbReference>
<dbReference type="Gene3D" id="3.30.710.10">
    <property type="entry name" value="Potassium Channel Kv1.1, Chain A"/>
    <property type="match status" value="1"/>
</dbReference>
<dbReference type="InterPro" id="IPR000210">
    <property type="entry name" value="BTB/POZ_dom"/>
</dbReference>
<dbReference type="InterPro" id="IPR045763">
    <property type="entry name" value="KCTD11/21_C"/>
</dbReference>
<dbReference type="InterPro" id="IPR011333">
    <property type="entry name" value="SKP1/BTB/POZ_sf"/>
</dbReference>
<dbReference type="InterPro" id="IPR003131">
    <property type="entry name" value="T1-type_BTB"/>
</dbReference>
<dbReference type="PANTHER" id="PTHR14499:SF57">
    <property type="entry name" value="BTB_POZ DOMAIN-CONTAINING PROTEIN KCTD21"/>
    <property type="match status" value="1"/>
</dbReference>
<dbReference type="PANTHER" id="PTHR14499">
    <property type="entry name" value="POTASSIUM CHANNEL TETRAMERIZATION DOMAIN-CONTAINING"/>
    <property type="match status" value="1"/>
</dbReference>
<dbReference type="Pfam" id="PF02214">
    <property type="entry name" value="BTB_2"/>
    <property type="match status" value="1"/>
</dbReference>
<dbReference type="Pfam" id="PF19329">
    <property type="entry name" value="KCTD11_21_C"/>
    <property type="match status" value="1"/>
</dbReference>
<dbReference type="SMART" id="SM00225">
    <property type="entry name" value="BTB"/>
    <property type="match status" value="1"/>
</dbReference>
<dbReference type="SUPFAM" id="SSF54695">
    <property type="entry name" value="POZ domain"/>
    <property type="match status" value="1"/>
</dbReference>
<dbReference type="PROSITE" id="PS50097">
    <property type="entry name" value="BTB"/>
    <property type="match status" value="1"/>
</dbReference>
<comment type="function">
    <text evidence="1">Probable substrate-specific adapter of a BCR (BTB-CUL3-RBX1) E3 ubiquitin-protein ligase complex mediating the ubiquitination and subsequent proteasomal degradation of target proteins. Promotes the ubiquitination of HDAC1. Can function as antagonist of the Hedgehog pathway by affecting the nuclear transfer of transcription factor GLI1; the function probably occurs via HDAC1 down-regulation, keeping GLI1 acetylated and inactive. Inhibits cell growth and tumorigenicity of medulloblastoma (MDB).</text>
</comment>
<comment type="pathway">
    <text>Protein modification; protein ubiquitination.</text>
</comment>
<comment type="subunit">
    <text evidence="1 6">Homopentamer. Interacts with KCTD11; KCTD21 and KCTD11 may associate in pentameric assemblies. Interacts (via BTB domain) with CUL3; indicative for a participation in a BCR (BTB-CUL3-RBX1) E3 ubiquitin-protein ligase complex (PubMed:21472142).</text>
</comment>
<comment type="tissue specificity">
    <text evidence="4">Highly expressed in cerebellum and brain. Expressed in adult cerebellum (at protein level).</text>
</comment>
<keyword id="KW-0175">Coiled coil</keyword>
<keyword id="KW-0341">Growth regulation</keyword>
<keyword id="KW-1185">Reference proteome</keyword>
<keyword id="KW-0043">Tumor suppressor</keyword>
<keyword id="KW-0833">Ubl conjugation pathway</keyword>
<sequence>MSDPITLNVGGKLYTTSLATLTSFPDSMLGAMFSGKMPTKRDSQGNCFIDRDGKVFRYILNFLRTSHLDLPEDFQEMGLLRREADFYQVQPLIEALQEKEVELSKAEKNAMLNITLKQRVQTVHFTVREAPQIYSLSSSSMEVFNANIFSTSCLFLKLLGSKLLYCSNGNLSSITSHLQDPNHLTLDWVANVEGLPEEEYTKQNLKRLWVVPANKQINSFQVFVEEVLKIALSDGFCIDSSHPHALDFMNNKIIRLIRYR</sequence>
<proteinExistence type="evidence at protein level"/>
<organism>
    <name type="scientific">Mus musculus</name>
    <name type="common">Mouse</name>
    <dbReference type="NCBI Taxonomy" id="10090"/>
    <lineage>
        <taxon>Eukaryota</taxon>
        <taxon>Metazoa</taxon>
        <taxon>Chordata</taxon>
        <taxon>Craniata</taxon>
        <taxon>Vertebrata</taxon>
        <taxon>Euteleostomi</taxon>
        <taxon>Mammalia</taxon>
        <taxon>Eutheria</taxon>
        <taxon>Euarchontoglires</taxon>
        <taxon>Glires</taxon>
        <taxon>Rodentia</taxon>
        <taxon>Myomorpha</taxon>
        <taxon>Muroidea</taxon>
        <taxon>Muridae</taxon>
        <taxon>Murinae</taxon>
        <taxon>Mus</taxon>
        <taxon>Mus</taxon>
    </lineage>
</organism>
<name>KCD21_MOUSE</name>
<reference key="1">
    <citation type="journal article" date="2005" name="Science">
        <title>The transcriptional landscape of the mammalian genome.</title>
        <authorList>
            <person name="Carninci P."/>
            <person name="Kasukawa T."/>
            <person name="Katayama S."/>
            <person name="Gough J."/>
            <person name="Frith M.C."/>
            <person name="Maeda N."/>
            <person name="Oyama R."/>
            <person name="Ravasi T."/>
            <person name="Lenhard B."/>
            <person name="Wells C."/>
            <person name="Kodzius R."/>
            <person name="Shimokawa K."/>
            <person name="Bajic V.B."/>
            <person name="Brenner S.E."/>
            <person name="Batalov S."/>
            <person name="Forrest A.R."/>
            <person name="Zavolan M."/>
            <person name="Davis M.J."/>
            <person name="Wilming L.G."/>
            <person name="Aidinis V."/>
            <person name="Allen J.E."/>
            <person name="Ambesi-Impiombato A."/>
            <person name="Apweiler R."/>
            <person name="Aturaliya R.N."/>
            <person name="Bailey T.L."/>
            <person name="Bansal M."/>
            <person name="Baxter L."/>
            <person name="Beisel K.W."/>
            <person name="Bersano T."/>
            <person name="Bono H."/>
            <person name="Chalk A.M."/>
            <person name="Chiu K.P."/>
            <person name="Choudhary V."/>
            <person name="Christoffels A."/>
            <person name="Clutterbuck D.R."/>
            <person name="Crowe M.L."/>
            <person name="Dalla E."/>
            <person name="Dalrymple B.P."/>
            <person name="de Bono B."/>
            <person name="Della Gatta G."/>
            <person name="di Bernardo D."/>
            <person name="Down T."/>
            <person name="Engstrom P."/>
            <person name="Fagiolini M."/>
            <person name="Faulkner G."/>
            <person name="Fletcher C.F."/>
            <person name="Fukushima T."/>
            <person name="Furuno M."/>
            <person name="Futaki S."/>
            <person name="Gariboldi M."/>
            <person name="Georgii-Hemming P."/>
            <person name="Gingeras T.R."/>
            <person name="Gojobori T."/>
            <person name="Green R.E."/>
            <person name="Gustincich S."/>
            <person name="Harbers M."/>
            <person name="Hayashi Y."/>
            <person name="Hensch T.K."/>
            <person name="Hirokawa N."/>
            <person name="Hill D."/>
            <person name="Huminiecki L."/>
            <person name="Iacono M."/>
            <person name="Ikeo K."/>
            <person name="Iwama A."/>
            <person name="Ishikawa T."/>
            <person name="Jakt M."/>
            <person name="Kanapin A."/>
            <person name="Katoh M."/>
            <person name="Kawasawa Y."/>
            <person name="Kelso J."/>
            <person name="Kitamura H."/>
            <person name="Kitano H."/>
            <person name="Kollias G."/>
            <person name="Krishnan S.P."/>
            <person name="Kruger A."/>
            <person name="Kummerfeld S.K."/>
            <person name="Kurochkin I.V."/>
            <person name="Lareau L.F."/>
            <person name="Lazarevic D."/>
            <person name="Lipovich L."/>
            <person name="Liu J."/>
            <person name="Liuni S."/>
            <person name="McWilliam S."/>
            <person name="Madan Babu M."/>
            <person name="Madera M."/>
            <person name="Marchionni L."/>
            <person name="Matsuda H."/>
            <person name="Matsuzawa S."/>
            <person name="Miki H."/>
            <person name="Mignone F."/>
            <person name="Miyake S."/>
            <person name="Morris K."/>
            <person name="Mottagui-Tabar S."/>
            <person name="Mulder N."/>
            <person name="Nakano N."/>
            <person name="Nakauchi H."/>
            <person name="Ng P."/>
            <person name="Nilsson R."/>
            <person name="Nishiguchi S."/>
            <person name="Nishikawa S."/>
            <person name="Nori F."/>
            <person name="Ohara O."/>
            <person name="Okazaki Y."/>
            <person name="Orlando V."/>
            <person name="Pang K.C."/>
            <person name="Pavan W.J."/>
            <person name="Pavesi G."/>
            <person name="Pesole G."/>
            <person name="Petrovsky N."/>
            <person name="Piazza S."/>
            <person name="Reed J."/>
            <person name="Reid J.F."/>
            <person name="Ring B.Z."/>
            <person name="Ringwald M."/>
            <person name="Rost B."/>
            <person name="Ruan Y."/>
            <person name="Salzberg S.L."/>
            <person name="Sandelin A."/>
            <person name="Schneider C."/>
            <person name="Schoenbach C."/>
            <person name="Sekiguchi K."/>
            <person name="Semple C.A."/>
            <person name="Seno S."/>
            <person name="Sessa L."/>
            <person name="Sheng Y."/>
            <person name="Shibata Y."/>
            <person name="Shimada H."/>
            <person name="Shimada K."/>
            <person name="Silva D."/>
            <person name="Sinclair B."/>
            <person name="Sperling S."/>
            <person name="Stupka E."/>
            <person name="Sugiura K."/>
            <person name="Sultana R."/>
            <person name="Takenaka Y."/>
            <person name="Taki K."/>
            <person name="Tammoja K."/>
            <person name="Tan S.L."/>
            <person name="Tang S."/>
            <person name="Taylor M.S."/>
            <person name="Tegner J."/>
            <person name="Teichmann S.A."/>
            <person name="Ueda H.R."/>
            <person name="van Nimwegen E."/>
            <person name="Verardo R."/>
            <person name="Wei C.L."/>
            <person name="Yagi K."/>
            <person name="Yamanishi H."/>
            <person name="Zabarovsky E."/>
            <person name="Zhu S."/>
            <person name="Zimmer A."/>
            <person name="Hide W."/>
            <person name="Bult C."/>
            <person name="Grimmond S.M."/>
            <person name="Teasdale R.D."/>
            <person name="Liu E.T."/>
            <person name="Brusic V."/>
            <person name="Quackenbush J."/>
            <person name="Wahlestedt C."/>
            <person name="Mattick J.S."/>
            <person name="Hume D.A."/>
            <person name="Kai C."/>
            <person name="Sasaki D."/>
            <person name="Tomaru Y."/>
            <person name="Fukuda S."/>
            <person name="Kanamori-Katayama M."/>
            <person name="Suzuki M."/>
            <person name="Aoki J."/>
            <person name="Arakawa T."/>
            <person name="Iida J."/>
            <person name="Imamura K."/>
            <person name="Itoh M."/>
            <person name="Kato T."/>
            <person name="Kawaji H."/>
            <person name="Kawagashira N."/>
            <person name="Kawashima T."/>
            <person name="Kojima M."/>
            <person name="Kondo S."/>
            <person name="Konno H."/>
            <person name="Nakano K."/>
            <person name="Ninomiya N."/>
            <person name="Nishio T."/>
            <person name="Okada M."/>
            <person name="Plessy C."/>
            <person name="Shibata K."/>
            <person name="Shiraki T."/>
            <person name="Suzuki S."/>
            <person name="Tagami M."/>
            <person name="Waki K."/>
            <person name="Watahiki A."/>
            <person name="Okamura-Oho Y."/>
            <person name="Suzuki H."/>
            <person name="Kawai J."/>
            <person name="Hayashizaki Y."/>
        </authorList>
    </citation>
    <scope>NUCLEOTIDE SEQUENCE [LARGE SCALE MRNA]</scope>
    <source>
        <strain>C57BL/6J</strain>
        <tissue>Hippocampus</tissue>
    </source>
</reference>
<reference key="2">
    <citation type="journal article" date="2010" name="Cell">
        <title>A tissue-specific atlas of mouse protein phosphorylation and expression.</title>
        <authorList>
            <person name="Huttlin E.L."/>
            <person name="Jedrychowski M.P."/>
            <person name="Elias J.E."/>
            <person name="Goswami T."/>
            <person name="Rad R."/>
            <person name="Beausoleil S.A."/>
            <person name="Villen J."/>
            <person name="Haas W."/>
            <person name="Sowa M.E."/>
            <person name="Gygi S.P."/>
        </authorList>
    </citation>
    <scope>IDENTIFICATION BY MASS SPECTROMETRY [LARGE SCALE ANALYSIS]</scope>
    <source>
        <tissue>Brain</tissue>
        <tissue>Lung</tissue>
    </source>
</reference>
<reference key="3">
    <citation type="journal article" date="2011" name="Neoplasia">
        <title>Identification and characterization of KCASH2 and KCASH3, 2 novel Cullin3 adaptors suppressing histone deacetylase and Hedgehog activity in medulloblastoma.</title>
        <authorList>
            <person name="De Smaele E."/>
            <person name="Di Marcotullio L."/>
            <person name="Moretti M."/>
            <person name="Pelloni M."/>
            <person name="Occhione M.A."/>
            <person name="Infante P."/>
            <person name="Cucchi D."/>
            <person name="Greco A."/>
            <person name="Pietrosanti L."/>
            <person name="Todorovic J."/>
            <person name="Coni S."/>
            <person name="Canettieri G."/>
            <person name="Ferretti E."/>
            <person name="Bei R."/>
            <person name="Maroder M."/>
            <person name="Screpanti I."/>
            <person name="Gulino A."/>
        </authorList>
    </citation>
    <scope>TISSUE SPECIFICITY</scope>
</reference>
<evidence type="ECO:0000250" key="1">
    <source>
        <dbReference type="UniProtKB" id="Q4G0X4"/>
    </source>
</evidence>
<evidence type="ECO:0000255" key="2"/>
<evidence type="ECO:0000255" key="3">
    <source>
        <dbReference type="PROSITE-ProRule" id="PRU00037"/>
    </source>
</evidence>
<evidence type="ECO:0000269" key="4">
    <source>
    </source>
</evidence>
<evidence type="ECO:0000303" key="5">
    <source>
    </source>
</evidence>
<evidence type="ECO:0000305" key="6"/>
<gene>
    <name type="primary">Kctd21</name>
</gene>
<accession>Q3URF8</accession>
<protein>
    <recommendedName>
        <fullName>BTB/POZ domain-containing protein KCTD21</fullName>
    </recommendedName>
    <alternativeName>
        <fullName evidence="5">KCASH2 protein</fullName>
    </alternativeName>
    <alternativeName>
        <fullName>Potassium channel tetramerization domain-containing protein 21</fullName>
    </alternativeName>
</protein>